<accession>A9MAI6</accession>
<dbReference type="EC" id="7.1.1.-" evidence="1"/>
<dbReference type="EMBL" id="CP000872">
    <property type="protein sequence ID" value="ABX61889.1"/>
    <property type="molecule type" value="Genomic_DNA"/>
</dbReference>
<dbReference type="RefSeq" id="WP_002963944.1">
    <property type="nucleotide sequence ID" value="NC_010103.1"/>
</dbReference>
<dbReference type="SMR" id="A9MAI6"/>
<dbReference type="GeneID" id="97533884"/>
<dbReference type="KEGG" id="bcs:BCAN_A0824"/>
<dbReference type="HOGENOM" id="CLU_015134_0_1_5"/>
<dbReference type="PhylomeDB" id="A9MAI6"/>
<dbReference type="Proteomes" id="UP000001385">
    <property type="component" value="Chromosome I"/>
</dbReference>
<dbReference type="GO" id="GO:0005886">
    <property type="term" value="C:plasma membrane"/>
    <property type="evidence" value="ECO:0007669"/>
    <property type="project" value="UniProtKB-SubCell"/>
</dbReference>
<dbReference type="GO" id="GO:0003954">
    <property type="term" value="F:NADH dehydrogenase activity"/>
    <property type="evidence" value="ECO:0007669"/>
    <property type="project" value="TreeGrafter"/>
</dbReference>
<dbReference type="GO" id="GO:0016655">
    <property type="term" value="F:oxidoreductase activity, acting on NAD(P)H, quinone or similar compound as acceptor"/>
    <property type="evidence" value="ECO:0007669"/>
    <property type="project" value="UniProtKB-UniRule"/>
</dbReference>
<dbReference type="GO" id="GO:0048038">
    <property type="term" value="F:quinone binding"/>
    <property type="evidence" value="ECO:0007669"/>
    <property type="project" value="UniProtKB-KW"/>
</dbReference>
<dbReference type="GO" id="GO:0009060">
    <property type="term" value="P:aerobic respiration"/>
    <property type="evidence" value="ECO:0007669"/>
    <property type="project" value="TreeGrafter"/>
</dbReference>
<dbReference type="HAMAP" id="MF_01350">
    <property type="entry name" value="NDH1_NuoH"/>
    <property type="match status" value="1"/>
</dbReference>
<dbReference type="InterPro" id="IPR001694">
    <property type="entry name" value="NADH_UbQ_OxRdtase_su1/FPO"/>
</dbReference>
<dbReference type="InterPro" id="IPR018086">
    <property type="entry name" value="NADH_UbQ_OxRdtase_su1_CS"/>
</dbReference>
<dbReference type="NCBIfam" id="NF004741">
    <property type="entry name" value="PRK06076.1-2"/>
    <property type="match status" value="1"/>
</dbReference>
<dbReference type="NCBIfam" id="NF004745">
    <property type="entry name" value="PRK06076.1-6"/>
    <property type="match status" value="1"/>
</dbReference>
<dbReference type="PANTHER" id="PTHR11432">
    <property type="entry name" value="NADH DEHYDROGENASE SUBUNIT 1"/>
    <property type="match status" value="1"/>
</dbReference>
<dbReference type="PANTHER" id="PTHR11432:SF3">
    <property type="entry name" value="NADH-UBIQUINONE OXIDOREDUCTASE CHAIN 1"/>
    <property type="match status" value="1"/>
</dbReference>
<dbReference type="Pfam" id="PF00146">
    <property type="entry name" value="NADHdh"/>
    <property type="match status" value="1"/>
</dbReference>
<dbReference type="PROSITE" id="PS00668">
    <property type="entry name" value="COMPLEX1_ND1_2"/>
    <property type="match status" value="1"/>
</dbReference>
<name>NUOH_BRUC2</name>
<keyword id="KW-0997">Cell inner membrane</keyword>
<keyword id="KW-1003">Cell membrane</keyword>
<keyword id="KW-0472">Membrane</keyword>
<keyword id="KW-0520">NAD</keyword>
<keyword id="KW-0874">Quinone</keyword>
<keyword id="KW-1185">Reference proteome</keyword>
<keyword id="KW-1278">Translocase</keyword>
<keyword id="KW-0812">Transmembrane</keyword>
<keyword id="KW-1133">Transmembrane helix</keyword>
<keyword id="KW-0830">Ubiquinone</keyword>
<feature type="chain" id="PRO_1000086935" description="NADH-quinone oxidoreductase subunit H">
    <location>
        <begin position="1"/>
        <end position="347"/>
    </location>
</feature>
<feature type="transmembrane region" description="Helical" evidence="1">
    <location>
        <begin position="13"/>
        <end position="33"/>
    </location>
</feature>
<feature type="transmembrane region" description="Helical" evidence="1">
    <location>
        <begin position="50"/>
        <end position="70"/>
    </location>
</feature>
<feature type="transmembrane region" description="Helical" evidence="1">
    <location>
        <begin position="82"/>
        <end position="102"/>
    </location>
</feature>
<feature type="transmembrane region" description="Helical" evidence="1">
    <location>
        <begin position="115"/>
        <end position="135"/>
    </location>
</feature>
<feature type="transmembrane region" description="Helical" evidence="1">
    <location>
        <begin position="161"/>
        <end position="181"/>
    </location>
</feature>
<feature type="transmembrane region" description="Helical" evidence="1">
    <location>
        <begin position="198"/>
        <end position="218"/>
    </location>
</feature>
<feature type="transmembrane region" description="Helical" evidence="1">
    <location>
        <begin position="248"/>
        <end position="268"/>
    </location>
</feature>
<feature type="transmembrane region" description="Helical" evidence="1">
    <location>
        <begin position="286"/>
        <end position="306"/>
    </location>
</feature>
<feature type="transmembrane region" description="Helical" evidence="1">
    <location>
        <begin position="325"/>
        <end position="345"/>
    </location>
</feature>
<protein>
    <recommendedName>
        <fullName evidence="1">NADH-quinone oxidoreductase subunit H</fullName>
        <ecNumber evidence="1">7.1.1.-</ecNumber>
    </recommendedName>
    <alternativeName>
        <fullName evidence="1">NADH dehydrogenase I subunit H</fullName>
    </alternativeName>
    <alternativeName>
        <fullName evidence="1">NDH-1 subunit H</fullName>
    </alternativeName>
</protein>
<proteinExistence type="inferred from homology"/>
<evidence type="ECO:0000255" key="1">
    <source>
        <dbReference type="HAMAP-Rule" id="MF_01350"/>
    </source>
</evidence>
<gene>
    <name evidence="1" type="primary">nuoH</name>
    <name type="ordered locus">BCAN_A0824</name>
</gene>
<comment type="function">
    <text evidence="1">NDH-1 shuttles electrons from NADH, via FMN and iron-sulfur (Fe-S) centers, to quinones in the respiratory chain. The immediate electron acceptor for the enzyme in this species is believed to be ubiquinone. Couples the redox reaction to proton translocation (for every two electrons transferred, four hydrogen ions are translocated across the cytoplasmic membrane), and thus conserves the redox energy in a proton gradient. This subunit may bind ubiquinone.</text>
</comment>
<comment type="catalytic activity">
    <reaction evidence="1">
        <text>a quinone + NADH + 5 H(+)(in) = a quinol + NAD(+) + 4 H(+)(out)</text>
        <dbReference type="Rhea" id="RHEA:57888"/>
        <dbReference type="ChEBI" id="CHEBI:15378"/>
        <dbReference type="ChEBI" id="CHEBI:24646"/>
        <dbReference type="ChEBI" id="CHEBI:57540"/>
        <dbReference type="ChEBI" id="CHEBI:57945"/>
        <dbReference type="ChEBI" id="CHEBI:132124"/>
    </reaction>
</comment>
<comment type="subunit">
    <text evidence="1">NDH-1 is composed of 14 different subunits. Subunits NuoA, H, J, K, L, M, N constitute the membrane sector of the complex.</text>
</comment>
<comment type="subcellular location">
    <subcellularLocation>
        <location evidence="1">Cell inner membrane</location>
        <topology evidence="1">Multi-pass membrane protein</topology>
    </subcellularLocation>
</comment>
<comment type="similarity">
    <text evidence="1">Belongs to the complex I subunit 1 family.</text>
</comment>
<sequence length="347" mass="38428">MEGIFAAYVLPALIIALKSVVLLVVLLIVVAYLLYADRKIWAAVQLRRGPNVVGPWGLFQAFADLLKFVFKEPIIPSGANKGVFLLAPFISAVLAMATWAVIPVNEGWAVANINVGILYIFAISSLEVYGVIMGGWASNSKYPFLGALRSAAQMVSYEVSIGFVIVTVLLTVGSLNLTDIVLSQNTGLGTMLGLPASFLDWNWLCLFPMFVVFFISALAETNRPPFDLVEAESELVAGHMIEYSSTPFLLFFLGEYVAITLMCALMTVLFLGGWLPPVDVWFLSWVPGIIWFMLKLCFCFFLFAMVKAFVPRYRYDQLMRLGWKVFLPISLFMVVATATFLKVFGLA</sequence>
<reference key="1">
    <citation type="submission" date="2007-10" db="EMBL/GenBank/DDBJ databases">
        <title>Brucella canis ATCC 23365 whole genome shotgun sequencing project.</title>
        <authorList>
            <person name="Setubal J.C."/>
            <person name="Bowns C."/>
            <person name="Boyle S."/>
            <person name="Crasta O.R."/>
            <person name="Czar M.J."/>
            <person name="Dharmanolla C."/>
            <person name="Gillespie J.J."/>
            <person name="Kenyon R.W."/>
            <person name="Lu J."/>
            <person name="Mane S."/>
            <person name="Mohapatra S."/>
            <person name="Nagrani S."/>
            <person name="Purkayastha A."/>
            <person name="Rajasimha H.K."/>
            <person name="Shallom J.M."/>
            <person name="Shallom S."/>
            <person name="Shukla M."/>
            <person name="Snyder E.E."/>
            <person name="Sobral B.W."/>
            <person name="Wattam A.R."/>
            <person name="Will R."/>
            <person name="Williams K."/>
            <person name="Yoo H."/>
            <person name="Bruce D."/>
            <person name="Detter C."/>
            <person name="Munk C."/>
            <person name="Brettin T.S."/>
        </authorList>
    </citation>
    <scope>NUCLEOTIDE SEQUENCE [LARGE SCALE GENOMIC DNA]</scope>
    <source>
        <strain>ATCC 23365 / NCTC 10854 / RM-666</strain>
    </source>
</reference>
<organism>
    <name type="scientific">Brucella canis (strain ATCC 23365 / NCTC 10854 / RM-666)</name>
    <dbReference type="NCBI Taxonomy" id="483179"/>
    <lineage>
        <taxon>Bacteria</taxon>
        <taxon>Pseudomonadati</taxon>
        <taxon>Pseudomonadota</taxon>
        <taxon>Alphaproteobacteria</taxon>
        <taxon>Hyphomicrobiales</taxon>
        <taxon>Brucellaceae</taxon>
        <taxon>Brucella/Ochrobactrum group</taxon>
        <taxon>Brucella</taxon>
    </lineage>
</organism>